<feature type="chain" id="PRO_0000043047" description="Virion infectivity factor" evidence="2">
    <location>
        <begin position="1"/>
        <end position="192"/>
    </location>
</feature>
<feature type="chain" id="PRO_0000043048" description="p17" evidence="2">
    <location>
        <begin position="1"/>
        <end position="150"/>
    </location>
</feature>
<feature type="chain" id="PRO_0000043049" description="p7" evidence="2">
    <location>
        <begin position="151"/>
        <end position="192"/>
    </location>
</feature>
<feature type="region of interest" description="Interaction with host APOBEC3F; F1-box" evidence="2">
    <location>
        <begin position="14"/>
        <end position="17"/>
    </location>
</feature>
<feature type="region of interest" description="Interaction with host APOBEC3G; G-box" evidence="2">
    <location>
        <begin position="40"/>
        <end position="44"/>
    </location>
</feature>
<feature type="region of interest" description="Interaction with host APOBEC3F and APOBEC3G; FG-box" evidence="2">
    <location>
        <begin position="54"/>
        <end position="72"/>
    </location>
</feature>
<feature type="region of interest" description="Interaction with host APOBEC3F; F2-box" evidence="2">
    <location>
        <begin position="74"/>
        <end position="79"/>
    </location>
</feature>
<feature type="region of interest" description="RNA-binding" evidence="2">
    <location>
        <begin position="75"/>
        <end position="114"/>
    </location>
</feature>
<feature type="region of interest" description="SOCS box-like" evidence="2">
    <location>
        <begin position="151"/>
        <end position="180"/>
    </location>
</feature>
<feature type="region of interest" description="Multimerization" evidence="2">
    <location>
        <begin position="151"/>
        <end position="164"/>
    </location>
</feature>
<feature type="region of interest" description="Disordered" evidence="3">
    <location>
        <begin position="165"/>
        <end position="192"/>
    </location>
</feature>
<feature type="region of interest" description="Membrane association" evidence="2">
    <location>
        <begin position="171"/>
        <end position="172"/>
    </location>
</feature>
<feature type="short sequence motif" description="HCCH motif" evidence="2">
    <location>
        <begin position="108"/>
        <end position="139"/>
    </location>
</feature>
<feature type="short sequence motif" description="BC-box-like motif" evidence="2">
    <location>
        <begin position="144"/>
        <end position="153"/>
    </location>
</feature>
<feature type="binding site" evidence="2">
    <location>
        <position position="108"/>
    </location>
    <ligand>
        <name>Zn(2+)</name>
        <dbReference type="ChEBI" id="CHEBI:29105"/>
    </ligand>
</feature>
<feature type="binding site" evidence="2">
    <location>
        <position position="114"/>
    </location>
    <ligand>
        <name>Zn(2+)</name>
        <dbReference type="ChEBI" id="CHEBI:29105"/>
    </ligand>
</feature>
<feature type="binding site" evidence="2">
    <location>
        <position position="133"/>
    </location>
    <ligand>
        <name>Zn(2+)</name>
        <dbReference type="ChEBI" id="CHEBI:29105"/>
    </ligand>
</feature>
<feature type="binding site" evidence="2">
    <location>
        <position position="139"/>
    </location>
    <ligand>
        <name>Zn(2+)</name>
        <dbReference type="ChEBI" id="CHEBI:29105"/>
    </ligand>
</feature>
<feature type="site" description="Cleavage in virion (by viral protease)" evidence="2">
    <location>
        <begin position="150"/>
        <end position="151"/>
    </location>
</feature>
<feature type="modified residue" description="Phosphothreonine; by host MAP4K1" evidence="2">
    <location>
        <position position="96"/>
    </location>
</feature>
<feature type="modified residue" description="Phosphoserine; by host" evidence="2">
    <location>
        <position position="144"/>
    </location>
</feature>
<feature type="modified residue" description="Phosphoserine; by host MAP4K1" evidence="2">
    <location>
        <position position="165"/>
    </location>
</feature>
<feature type="modified residue" description="Phosphothreonine; by host" evidence="2">
    <location>
        <position position="188"/>
    </location>
</feature>
<protein>
    <recommendedName>
        <fullName evidence="2">Virion infectivity factor</fullName>
        <shortName evidence="2">Vif</shortName>
    </recommendedName>
    <alternativeName>
        <fullName evidence="2">SOR protein</fullName>
    </alternativeName>
    <component>
        <recommendedName>
            <fullName evidence="2">p17</fullName>
        </recommendedName>
    </component>
    <component>
        <recommendedName>
            <fullName evidence="2">p7</fullName>
        </recommendedName>
    </component>
</protein>
<gene>
    <name evidence="2" type="primary">vif</name>
</gene>
<keyword id="KW-0014">AIDS</keyword>
<keyword id="KW-1032">Host cell membrane</keyword>
<keyword id="KW-1035">Host cytoplasm</keyword>
<keyword id="KW-1043">Host membrane</keyword>
<keyword id="KW-0945">Host-virus interaction</keyword>
<keyword id="KW-0472">Membrane</keyword>
<keyword id="KW-0479">Metal-binding</keyword>
<keyword id="KW-0597">Phosphoprotein</keyword>
<keyword id="KW-1185">Reference proteome</keyword>
<keyword id="KW-0694">RNA-binding</keyword>
<keyword id="KW-0832">Ubl conjugation</keyword>
<keyword id="KW-0833">Ubl conjugation pathway</keyword>
<keyword id="KW-0946">Virion</keyword>
<keyword id="KW-0862">Zinc</keyword>
<dbReference type="EMBL" id="K03454">
    <property type="protein sequence ID" value="AAA44326.1"/>
    <property type="molecule type" value="Genomic_DNA"/>
</dbReference>
<dbReference type="SMR" id="P04597"/>
<dbReference type="Proteomes" id="UP000007693">
    <property type="component" value="Segment"/>
</dbReference>
<dbReference type="GO" id="GO:0030430">
    <property type="term" value="C:host cell cytoplasm"/>
    <property type="evidence" value="ECO:0007669"/>
    <property type="project" value="UniProtKB-SubCell"/>
</dbReference>
<dbReference type="GO" id="GO:0020002">
    <property type="term" value="C:host cell plasma membrane"/>
    <property type="evidence" value="ECO:0007669"/>
    <property type="project" value="UniProtKB-SubCell"/>
</dbReference>
<dbReference type="GO" id="GO:0016020">
    <property type="term" value="C:membrane"/>
    <property type="evidence" value="ECO:0007669"/>
    <property type="project" value="UniProtKB-UniRule"/>
</dbReference>
<dbReference type="GO" id="GO:0044423">
    <property type="term" value="C:virion component"/>
    <property type="evidence" value="ECO:0007669"/>
    <property type="project" value="UniProtKB-UniRule"/>
</dbReference>
<dbReference type="GO" id="GO:0046872">
    <property type="term" value="F:metal ion binding"/>
    <property type="evidence" value="ECO:0007669"/>
    <property type="project" value="UniProtKB-KW"/>
</dbReference>
<dbReference type="GO" id="GO:0003723">
    <property type="term" value="F:RNA binding"/>
    <property type="evidence" value="ECO:0007669"/>
    <property type="project" value="UniProtKB-UniRule"/>
</dbReference>
<dbReference type="GO" id="GO:0019058">
    <property type="term" value="P:viral life cycle"/>
    <property type="evidence" value="ECO:0007669"/>
    <property type="project" value="InterPro"/>
</dbReference>
<dbReference type="HAMAP" id="MF_04081">
    <property type="entry name" value="HIV_VIF"/>
    <property type="match status" value="1"/>
</dbReference>
<dbReference type="InterPro" id="IPR000475">
    <property type="entry name" value="Vif"/>
</dbReference>
<dbReference type="Pfam" id="PF00559">
    <property type="entry name" value="Vif"/>
    <property type="match status" value="1"/>
</dbReference>
<dbReference type="PRINTS" id="PR00349">
    <property type="entry name" value="VIRIONINFFCT"/>
</dbReference>
<reference key="1">
    <citation type="journal article" date="1986" name="Cell">
        <title>Genetic variability of the AIDS virus: nucleotide sequence analysis of two isolates from African patients.</title>
        <authorList>
            <person name="Alizon M."/>
            <person name="Wain-Hobson S."/>
            <person name="Montagnier L."/>
            <person name="Sonigo P."/>
        </authorList>
    </citation>
    <scope>NUCLEOTIDE SEQUENCE [GENOMIC DNA]</scope>
</reference>
<reference key="2">
    <citation type="journal article" date="2004" name="Trends Mol. Med.">
        <title>The viral infectivity factor (Vif) of HIV-1 unveiled.</title>
        <authorList>
            <person name="Rose K.M."/>
            <person name="Marin M."/>
            <person name="Kozak S.L."/>
            <person name="Kabat D."/>
        </authorList>
    </citation>
    <scope>REVIEW</scope>
</reference>
<comment type="function">
    <text evidence="2">Counteracts the innate antiviral activity of host APOBEC3F and APOBEC3G by promoting their ubiquitination and degradation. Acts as a substrate recognition component of an E3 ubiquitin-protein ligase complex: mechanistically, Vif hijacks a host cullin-5-RING E3 ubiquitin-protein ligase complex (ECS complex) and the transcription coactivator CBFB/CBF-beta to form an active E3 ubiquitin-protein ligase complex that targets APOBEC3G and APOBEC3F for polyubiquitination, leading to their degradation by the proteasome. Vif interaction with APOBEC3G also blocks its cytidine deaminase activity in a proteasome-independent manner, suggesting a dual inhibitory mechanism. May interact directly with APOBEC3G mRNA in order to inhibit its translation. Association with CBFB/CBF-beta also inhibits the transcription coactivator activity of CBFB/CBF-beta. Seems to play a role in viral morphology by affecting the stability of the viral nucleoprotein core. Finally, Vif also contributes to the G2 cell cycle arrest observed in HIV infected cells.</text>
</comment>
<comment type="subunit">
    <text evidence="1">Homomultimer; in vitro and presumably in vivo. Interacts with viral RNA and Pr55Gag precursor; these interactions mediate Vif incorporation into the virion. Interacts with the viral reverse transcriptase. Forms cullin-5-RING E3 ubiquitin-protein ligase complex (ECS complex) by interacting with host CUL5, RBX2, elongin BC complex (ELOB and ELOC) and CBFB/CBF-beta. Within the ECS complex, Vif interacts directly with host CUL5, ELOC and APOBEC (APOBEC3F and APOBEC3G) substrates. The ECS complex also contains some single-stranded RNA (ssRNA) that acts as a glue that bridges Vif with APOBEC (APOBEC3F and APOBEC3G) substrates. Interacts with host UBCE7IP1 isoform 3/ZIN and possibly with SAT. Interacts with host tyrosine kinases HCK and FYN; these interactions may decrease level of phosphorylated APOBEC3G incorporation into virions. Interacts with host ABCE1; this interaction may play a role in protecting viral RNA from damage during viral assembly. Interacts with host MDM2; this interaction targets Vif for degradation by the proteasome.</text>
</comment>
<comment type="subcellular location">
    <subcellularLocation>
        <location evidence="2">Host cytoplasm</location>
    </subcellularLocation>
    <subcellularLocation>
        <location evidence="2">Host cell membrane</location>
        <topology evidence="2">Peripheral membrane protein</topology>
        <orientation evidence="2">Cytoplasmic side</orientation>
    </subcellularLocation>
    <subcellularLocation>
        <location evidence="2">Virion</location>
    </subcellularLocation>
    <text evidence="2">In the cytoplasm, seems to colocalize with intermediate filament vimentin. A fraction is associated with the cytoplasmic side of cellular membranes, presumably via the interaction with Pr55Gag precursor. Incorporated in virions at a ratio of approximately 7 to 20 molecules per virion.</text>
</comment>
<comment type="induction">
    <text evidence="2">Expressed late during infection in a Rev-dependent manner.</text>
</comment>
<comment type="domain">
    <text evidence="2">The BC-like-box motif mediates the interaction with elongin BC complex.</text>
</comment>
<comment type="domain">
    <text evidence="2">The HCCH motif (H-x(5)-C-x(18)-C-x(5)-H) mediates the interaction with CUL5.</text>
</comment>
<comment type="PTM">
    <text evidence="2">Processed in virion by the viral protease.</text>
</comment>
<comment type="PTM">
    <text evidence="2">Highly phosphorylated on serine and threonine residues.</text>
</comment>
<comment type="PTM">
    <text evidence="2">Polyubiquitinated and degraded by the proteasome in the presence of APOBEC3G.</text>
</comment>
<comment type="miscellaneous">
    <text evidence="2">Vif-defective viruses show catastrophic failure in reverse transcription due to APOBEC-induced mutations that initiate a DNA base repair pathway and compromise the structural integrity of the ssDNA. In the absence of Vif, the virion is morphologically abnormal.</text>
</comment>
<comment type="miscellaneous">
    <text evidence="2">HIV-1 lineages are divided in three main groups, M (for Major), O (for Outlier), and N (for New, or Non-M, Non-O). The vast majority of strains found worldwide belong to the group M. Group O seems to be endemic to and largely confined to Cameroon and neighboring countries in West Central Africa, where these viruses represent a small minority of HIV-1 strains. The group N is represented by a limited number of isolates from Cameroonian persons. The group M is further subdivided in 9 clades or subtypes (A to D, F to H, J and K).</text>
</comment>
<comment type="miscellaneous">
    <text evidence="2">Required for replication in 'nonpermissive' cells, including primary T-cells, macrophages and certain T-cell lines, but is dispensable for replication in 'permissive' cell lines, such as 293T cells. In nonpermissive cells, Vif-defective viruses can produce virions, but they fail to complete reverse transcription and cannot successfully infect new cells.</text>
</comment>
<comment type="similarity">
    <text evidence="2">Belongs to the primate lentivirus group Vif protein family.</text>
</comment>
<name>VIF_HV1EL</name>
<organismHost>
    <name type="scientific">Homo sapiens</name>
    <name type="common">Human</name>
    <dbReference type="NCBI Taxonomy" id="9606"/>
</organismHost>
<organism>
    <name type="scientific">Human immunodeficiency virus type 1 group M subtype D (isolate ELI)</name>
    <name type="common">HIV-1</name>
    <dbReference type="NCBI Taxonomy" id="11689"/>
    <lineage>
        <taxon>Viruses</taxon>
        <taxon>Riboviria</taxon>
        <taxon>Pararnavirae</taxon>
        <taxon>Artverviricota</taxon>
        <taxon>Revtraviricetes</taxon>
        <taxon>Ortervirales</taxon>
        <taxon>Retroviridae</taxon>
        <taxon>Orthoretrovirinae</taxon>
        <taxon>Lentivirus</taxon>
        <taxon>Human immunodeficiency virus type 1</taxon>
    </lineage>
</organism>
<evidence type="ECO:0000250" key="1">
    <source>
        <dbReference type="UniProtKB" id="O70897"/>
    </source>
</evidence>
<evidence type="ECO:0000255" key="2">
    <source>
        <dbReference type="HAMAP-Rule" id="MF_04081"/>
    </source>
</evidence>
<evidence type="ECO:0000256" key="3">
    <source>
        <dbReference type="SAM" id="MobiDB-lite"/>
    </source>
</evidence>
<sequence length="192" mass="22689">MENRWQVMIVWQVDRMRIKTWKSLVKHHMYVSKKANRWFYRHHYESPHPKISSEVHIPLGEARLVIKTYWGLHTGEREWHLGQGVSIEWRKRRYSTQVDPGLADQLIHMYYFDCFSESAIRKAILGDIVSPRCEYQAGHNKVGSLQYLALTALIAPKQIKPPLPSVRKLTEDRWNKPQQTRGHRGSHTMNGH</sequence>
<accession>P04597</accession>
<proteinExistence type="inferred from homology"/>